<evidence type="ECO:0000250" key="1"/>
<evidence type="ECO:0000305" key="2"/>
<comment type="function">
    <text evidence="1">F-actin-capping proteins bind in a Ca(2+)-independent manner to the fast growing ends of actin filaments (barbed end) thereby blocking the exchange of subunits at these ends. Unlike other capping proteins (such as gelsolin and severin), these proteins do not sever actin filaments (By similarity).</text>
</comment>
<comment type="subunit">
    <text evidence="1">Heterodimer of an alpha and a beta subunit.</text>
</comment>
<comment type="subcellular location">
    <subcellularLocation>
        <location evidence="1">Cytoplasm</location>
        <location evidence="1">Cytoskeleton</location>
    </subcellularLocation>
    <text evidence="1">Septum.</text>
</comment>
<comment type="similarity">
    <text evidence="2">Belongs to the F-actin-capping protein alpha subunit family.</text>
</comment>
<keyword id="KW-0117">Actin capping</keyword>
<keyword id="KW-0009">Actin-binding</keyword>
<keyword id="KW-0963">Cytoplasm</keyword>
<keyword id="KW-0206">Cytoskeleton</keyword>
<keyword id="KW-1185">Reference proteome</keyword>
<protein>
    <recommendedName>
        <fullName>F-actin-capping protein subunit alpha</fullName>
    </recommendedName>
</protein>
<accession>Q5A893</accession>
<accession>A0A1D8PRV7</accession>
<reference key="1">
    <citation type="journal article" date="2004" name="Proc. Natl. Acad. Sci. U.S.A.">
        <title>The diploid genome sequence of Candida albicans.</title>
        <authorList>
            <person name="Jones T."/>
            <person name="Federspiel N.A."/>
            <person name="Chibana H."/>
            <person name="Dungan J."/>
            <person name="Kalman S."/>
            <person name="Magee B.B."/>
            <person name="Newport G."/>
            <person name="Thorstenson Y.R."/>
            <person name="Agabian N."/>
            <person name="Magee P.T."/>
            <person name="Davis R.W."/>
            <person name="Scherer S."/>
        </authorList>
    </citation>
    <scope>NUCLEOTIDE SEQUENCE [LARGE SCALE GENOMIC DNA]</scope>
    <source>
        <strain>SC5314 / ATCC MYA-2876</strain>
    </source>
</reference>
<reference key="2">
    <citation type="journal article" date="2007" name="Genome Biol.">
        <title>Assembly of the Candida albicans genome into sixteen supercontigs aligned on the eight chromosomes.</title>
        <authorList>
            <person name="van het Hoog M."/>
            <person name="Rast T.J."/>
            <person name="Martchenko M."/>
            <person name="Grindle S."/>
            <person name="Dignard D."/>
            <person name="Hogues H."/>
            <person name="Cuomo C."/>
            <person name="Berriman M."/>
            <person name="Scherer S."/>
            <person name="Magee B.B."/>
            <person name="Whiteway M."/>
            <person name="Chibana H."/>
            <person name="Nantel A."/>
            <person name="Magee P.T."/>
        </authorList>
    </citation>
    <scope>GENOME REANNOTATION</scope>
    <source>
        <strain>SC5314 / ATCC MYA-2876</strain>
    </source>
</reference>
<reference key="3">
    <citation type="journal article" date="2013" name="Genome Biol.">
        <title>Assembly of a phased diploid Candida albicans genome facilitates allele-specific measurements and provides a simple model for repeat and indel structure.</title>
        <authorList>
            <person name="Muzzey D."/>
            <person name="Schwartz K."/>
            <person name="Weissman J.S."/>
            <person name="Sherlock G."/>
        </authorList>
    </citation>
    <scope>NUCLEOTIDE SEQUENCE [LARGE SCALE GENOMIC DNA]</scope>
    <scope>GENOME REANNOTATION</scope>
    <source>
        <strain>SC5314 / ATCC MYA-2876</strain>
    </source>
</reference>
<sequence>MSINLNELVDSLIQSAPPAELKQVSQSLSSLTKGTSTSSTNSLIQDSIEQYAQENIISIDNIIISKYNKDENSSKYIDYVNNKLFNVDWQNQKIIDVESYHDNNNKRGSNYDELIQKLSQYGDDYYPSNFAFTVIPESEDQLRVIIIGQRANHDNFYTGQWKSNYLITEQGIKGNIDLDIHYFEDGNVRLKFNESINSSNNNNNSSTLQSGNLINNASRIVNFINEQENATMVKIIEQFNNLNQKSFKNLRRLLPVTRSKINWGSAIGNYRLGSDVINKK</sequence>
<dbReference type="EMBL" id="CP017630">
    <property type="protein sequence ID" value="AOW30879.1"/>
    <property type="molecule type" value="Genomic_DNA"/>
</dbReference>
<dbReference type="RefSeq" id="XP_717926.2">
    <property type="nucleotide sequence ID" value="XM_712833.2"/>
</dbReference>
<dbReference type="SMR" id="Q5A893"/>
<dbReference type="FunCoup" id="Q5A893">
    <property type="interactions" value="862"/>
</dbReference>
<dbReference type="STRING" id="237561.Q5A893"/>
<dbReference type="EnsemblFungi" id="CR_01180W_A-T">
    <property type="protein sequence ID" value="CR_01180W_A-T-p1"/>
    <property type="gene ID" value="CR_01180W_A"/>
</dbReference>
<dbReference type="GeneID" id="3640427"/>
<dbReference type="KEGG" id="cal:CAALFM_CR01180WA"/>
<dbReference type="CGD" id="CAL0000176864">
    <property type="gene designation" value="orf19.10745"/>
</dbReference>
<dbReference type="VEuPathDB" id="FungiDB:CR_01180W_A"/>
<dbReference type="eggNOG" id="KOG0836">
    <property type="taxonomic scope" value="Eukaryota"/>
</dbReference>
<dbReference type="HOGENOM" id="CLU_045161_3_0_1"/>
<dbReference type="InParanoid" id="Q5A893"/>
<dbReference type="OMA" id="VACIEDH"/>
<dbReference type="OrthoDB" id="340550at2759"/>
<dbReference type="PRO" id="PR:Q5A893"/>
<dbReference type="Proteomes" id="UP000000559">
    <property type="component" value="Chromosome R"/>
</dbReference>
<dbReference type="GO" id="GO:0030479">
    <property type="term" value="C:actin cortical patch"/>
    <property type="evidence" value="ECO:0000318"/>
    <property type="project" value="GO_Central"/>
</dbReference>
<dbReference type="GO" id="GO:0005934">
    <property type="term" value="C:cellular bud tip"/>
    <property type="evidence" value="ECO:0007669"/>
    <property type="project" value="EnsemblFungi"/>
</dbReference>
<dbReference type="GO" id="GO:0030863">
    <property type="term" value="C:cortical cytoskeleton"/>
    <property type="evidence" value="ECO:0000318"/>
    <property type="project" value="GO_Central"/>
</dbReference>
<dbReference type="GO" id="GO:0008290">
    <property type="term" value="C:F-actin capping protein complex"/>
    <property type="evidence" value="ECO:0000318"/>
    <property type="project" value="GO_Central"/>
</dbReference>
<dbReference type="GO" id="GO:0000131">
    <property type="term" value="C:incipient cellular bud site"/>
    <property type="evidence" value="ECO:0007669"/>
    <property type="project" value="EnsemblFungi"/>
</dbReference>
<dbReference type="GO" id="GO:0110085">
    <property type="term" value="C:mitotic actomyosin contractile ring"/>
    <property type="evidence" value="ECO:0007669"/>
    <property type="project" value="EnsemblFungi"/>
</dbReference>
<dbReference type="GO" id="GO:0051015">
    <property type="term" value="F:actin filament binding"/>
    <property type="evidence" value="ECO:0000318"/>
    <property type="project" value="GO_Central"/>
</dbReference>
<dbReference type="GO" id="GO:0030036">
    <property type="term" value="P:actin cytoskeleton organization"/>
    <property type="evidence" value="ECO:0000318"/>
    <property type="project" value="GO_Central"/>
</dbReference>
<dbReference type="GO" id="GO:0051016">
    <property type="term" value="P:barbed-end actin filament capping"/>
    <property type="evidence" value="ECO:0000318"/>
    <property type="project" value="GO_Central"/>
</dbReference>
<dbReference type="FunFam" id="3.90.1150.210:FF:000014">
    <property type="entry name" value="F-actin-capping protein subunit alpha"/>
    <property type="match status" value="1"/>
</dbReference>
<dbReference type="Gene3D" id="3.30.1140.60">
    <property type="entry name" value="F-actin capping protein, alpha subunit"/>
    <property type="match status" value="1"/>
</dbReference>
<dbReference type="Gene3D" id="3.90.1150.210">
    <property type="entry name" value="F-actin capping protein, beta subunit"/>
    <property type="match status" value="1"/>
</dbReference>
<dbReference type="InterPro" id="IPR002189">
    <property type="entry name" value="CapZ_alpha"/>
</dbReference>
<dbReference type="InterPro" id="IPR037282">
    <property type="entry name" value="CapZ_alpha/beta"/>
</dbReference>
<dbReference type="InterPro" id="IPR042276">
    <property type="entry name" value="CapZ_alpha/beta_2"/>
</dbReference>
<dbReference type="InterPro" id="IPR042489">
    <property type="entry name" value="CapZ_alpha_1"/>
</dbReference>
<dbReference type="InterPro" id="IPR017865">
    <property type="entry name" value="F-actin_cap_asu_CS"/>
</dbReference>
<dbReference type="PANTHER" id="PTHR10653">
    <property type="entry name" value="F-ACTIN-CAPPING PROTEIN SUBUNIT ALPHA"/>
    <property type="match status" value="1"/>
</dbReference>
<dbReference type="PANTHER" id="PTHR10653:SF0">
    <property type="entry name" value="F-ACTIN-CAPPING PROTEIN SUBUNIT ALPHA"/>
    <property type="match status" value="1"/>
</dbReference>
<dbReference type="Pfam" id="PF01267">
    <property type="entry name" value="F-actin_cap_A"/>
    <property type="match status" value="1"/>
</dbReference>
<dbReference type="PRINTS" id="PR00191">
    <property type="entry name" value="FACTINCAPA"/>
</dbReference>
<dbReference type="SUPFAM" id="SSF90096">
    <property type="entry name" value="Subunits of heterodimeric actin filament capping protein Capz"/>
    <property type="match status" value="1"/>
</dbReference>
<dbReference type="PROSITE" id="PS00749">
    <property type="entry name" value="F_ACTIN_CAPPING_A_2"/>
    <property type="match status" value="1"/>
</dbReference>
<feature type="chain" id="PRO_0000255616" description="F-actin-capping protein subunit alpha">
    <location>
        <begin position="1"/>
        <end position="280"/>
    </location>
</feature>
<proteinExistence type="inferred from homology"/>
<gene>
    <name type="primary">CAP01</name>
    <name type="ordered locus">CAALFM_CR01180WA</name>
    <name type="ORF">CaO19.10745</name>
    <name type="ORF">CaO19.3235</name>
</gene>
<name>CAPZA_CANAL</name>
<organism>
    <name type="scientific">Candida albicans (strain SC5314 / ATCC MYA-2876)</name>
    <name type="common">Yeast</name>
    <dbReference type="NCBI Taxonomy" id="237561"/>
    <lineage>
        <taxon>Eukaryota</taxon>
        <taxon>Fungi</taxon>
        <taxon>Dikarya</taxon>
        <taxon>Ascomycota</taxon>
        <taxon>Saccharomycotina</taxon>
        <taxon>Pichiomycetes</taxon>
        <taxon>Debaryomycetaceae</taxon>
        <taxon>Candida/Lodderomyces clade</taxon>
        <taxon>Candida</taxon>
    </lineage>
</organism>